<comment type="function">
    <text evidence="1">Thiolesterase that catalyzes the hydrolysis of S-D-lactoyl-glutathione to form glutathione and D-lactic acid.</text>
</comment>
<comment type="catalytic activity">
    <reaction evidence="1">
        <text>an S-(2-hydroxyacyl)glutathione + H2O = a 2-hydroxy carboxylate + glutathione + H(+)</text>
        <dbReference type="Rhea" id="RHEA:21864"/>
        <dbReference type="ChEBI" id="CHEBI:15377"/>
        <dbReference type="ChEBI" id="CHEBI:15378"/>
        <dbReference type="ChEBI" id="CHEBI:57925"/>
        <dbReference type="ChEBI" id="CHEBI:58896"/>
        <dbReference type="ChEBI" id="CHEBI:71261"/>
        <dbReference type="EC" id="3.1.2.6"/>
    </reaction>
</comment>
<comment type="cofactor">
    <cofactor evidence="1">
        <name>Zn(2+)</name>
        <dbReference type="ChEBI" id="CHEBI:29105"/>
    </cofactor>
    <text evidence="1">Binds 2 Zn(2+) ions per subunit.</text>
</comment>
<comment type="pathway">
    <text evidence="1">Secondary metabolite metabolism; methylglyoxal degradation; (R)-lactate from methylglyoxal: step 2/2.</text>
</comment>
<comment type="subunit">
    <text evidence="1">Monomer.</text>
</comment>
<comment type="similarity">
    <text evidence="1">Belongs to the metallo-beta-lactamase superfamily. Glyoxalase II family.</text>
</comment>
<organism>
    <name type="scientific">Xylella fastidiosa (strain Temecula1 / ATCC 700964)</name>
    <dbReference type="NCBI Taxonomy" id="183190"/>
    <lineage>
        <taxon>Bacteria</taxon>
        <taxon>Pseudomonadati</taxon>
        <taxon>Pseudomonadota</taxon>
        <taxon>Gammaproteobacteria</taxon>
        <taxon>Lysobacterales</taxon>
        <taxon>Lysobacteraceae</taxon>
        <taxon>Xylella</taxon>
    </lineage>
</organism>
<feature type="chain" id="PRO_1000068235" description="Hydroxyacylglutathione hydrolase">
    <location>
        <begin position="1"/>
        <end position="258"/>
    </location>
</feature>
<feature type="binding site" evidence="1">
    <location>
        <position position="52"/>
    </location>
    <ligand>
        <name>Zn(2+)</name>
        <dbReference type="ChEBI" id="CHEBI:29105"/>
        <label>1</label>
    </ligand>
</feature>
<feature type="binding site" evidence="1">
    <location>
        <position position="54"/>
    </location>
    <ligand>
        <name>Zn(2+)</name>
        <dbReference type="ChEBI" id="CHEBI:29105"/>
        <label>1</label>
    </ligand>
</feature>
<feature type="binding site" evidence="1">
    <location>
        <position position="56"/>
    </location>
    <ligand>
        <name>Zn(2+)</name>
        <dbReference type="ChEBI" id="CHEBI:29105"/>
        <label>2</label>
    </ligand>
</feature>
<feature type="binding site" evidence="1">
    <location>
        <position position="57"/>
    </location>
    <ligand>
        <name>Zn(2+)</name>
        <dbReference type="ChEBI" id="CHEBI:29105"/>
        <label>2</label>
    </ligand>
</feature>
<feature type="binding site" evidence="1">
    <location>
        <position position="109"/>
    </location>
    <ligand>
        <name>Zn(2+)</name>
        <dbReference type="ChEBI" id="CHEBI:29105"/>
        <label>1</label>
    </ligand>
</feature>
<feature type="binding site" evidence="1">
    <location>
        <position position="126"/>
    </location>
    <ligand>
        <name>Zn(2+)</name>
        <dbReference type="ChEBI" id="CHEBI:29105"/>
        <label>1</label>
    </ligand>
</feature>
<feature type="binding site" evidence="1">
    <location>
        <position position="126"/>
    </location>
    <ligand>
        <name>Zn(2+)</name>
        <dbReference type="ChEBI" id="CHEBI:29105"/>
        <label>2</label>
    </ligand>
</feature>
<feature type="binding site" evidence="1">
    <location>
        <position position="164"/>
    </location>
    <ligand>
        <name>Zn(2+)</name>
        <dbReference type="ChEBI" id="CHEBI:29105"/>
        <label>2</label>
    </ligand>
</feature>
<reference key="1">
    <citation type="journal article" date="2003" name="J. Bacteriol.">
        <title>Comparative analyses of the complete genome sequences of Pierce's disease and citrus variegated chlorosis strains of Xylella fastidiosa.</title>
        <authorList>
            <person name="Van Sluys M.A."/>
            <person name="de Oliveira M.C."/>
            <person name="Monteiro-Vitorello C.B."/>
            <person name="Miyaki C.Y."/>
            <person name="Furlan L.R."/>
            <person name="Camargo L.E.A."/>
            <person name="da Silva A.C.R."/>
            <person name="Moon D.H."/>
            <person name="Takita M.A."/>
            <person name="Lemos E.G.M."/>
            <person name="Machado M.A."/>
            <person name="Ferro M.I.T."/>
            <person name="da Silva F.R."/>
            <person name="Goldman M.H.S."/>
            <person name="Goldman G.H."/>
            <person name="Lemos M.V.F."/>
            <person name="El-Dorry H."/>
            <person name="Tsai S.M."/>
            <person name="Carrer H."/>
            <person name="Carraro D.M."/>
            <person name="de Oliveira R.C."/>
            <person name="Nunes L.R."/>
            <person name="Siqueira W.J."/>
            <person name="Coutinho L.L."/>
            <person name="Kimura E.T."/>
            <person name="Ferro E.S."/>
            <person name="Harakava R."/>
            <person name="Kuramae E.E."/>
            <person name="Marino C.L."/>
            <person name="Giglioti E."/>
            <person name="Abreu I.L."/>
            <person name="Alves L.M.C."/>
            <person name="do Amaral A.M."/>
            <person name="Baia G.S."/>
            <person name="Blanco S.R."/>
            <person name="Brito M.S."/>
            <person name="Cannavan F.S."/>
            <person name="Celestino A.V."/>
            <person name="da Cunha A.F."/>
            <person name="Fenille R.C."/>
            <person name="Ferro J.A."/>
            <person name="Formighieri E.F."/>
            <person name="Kishi L.T."/>
            <person name="Leoni S.G."/>
            <person name="Oliveira A.R."/>
            <person name="Rosa V.E. Jr."/>
            <person name="Sassaki F.T."/>
            <person name="Sena J.A.D."/>
            <person name="de Souza A.A."/>
            <person name="Truffi D."/>
            <person name="Tsukumo F."/>
            <person name="Yanai G.M."/>
            <person name="Zaros L.G."/>
            <person name="Civerolo E.L."/>
            <person name="Simpson A.J.G."/>
            <person name="Almeida N.F. Jr."/>
            <person name="Setubal J.C."/>
            <person name="Kitajima J.P."/>
        </authorList>
    </citation>
    <scope>NUCLEOTIDE SEQUENCE [LARGE SCALE GENOMIC DNA]</scope>
    <source>
        <strain>Temecula1 / ATCC 700964</strain>
    </source>
</reference>
<accession>Q87C74</accession>
<gene>
    <name evidence="1" type="primary">gloB</name>
    <name type="ordered locus">PD_1220</name>
</gene>
<protein>
    <recommendedName>
        <fullName evidence="1">Hydroxyacylglutathione hydrolase</fullName>
        <ecNumber evidence="1">3.1.2.6</ecNumber>
    </recommendedName>
    <alternativeName>
        <fullName evidence="1">Glyoxalase II</fullName>
        <shortName evidence="1">Glx II</shortName>
    </alternativeName>
</protein>
<name>GLO2_XYLFT</name>
<keyword id="KW-0378">Hydrolase</keyword>
<keyword id="KW-0479">Metal-binding</keyword>
<keyword id="KW-1185">Reference proteome</keyword>
<keyword id="KW-0862">Zinc</keyword>
<proteinExistence type="inferred from homology"/>
<evidence type="ECO:0000255" key="1">
    <source>
        <dbReference type="HAMAP-Rule" id="MF_01374"/>
    </source>
</evidence>
<sequence length="258" mass="28495">MRLTPLPAFDNNYIWTLIAPDGRAIIVDPGQALPILEAHSKGLIPTAILLTHHHADHIGGVPELLERWPTLPVYAPHDTRIALNYHRIGEGDSLNILGMRFQVIHTPGHTHSHLTFIGNDLLFCGDTLFSLGCGQIFEGTPTQMLASLQRLAALPIQTRVCCGHEYTLSNAAFALHVDPTNTALQKRRQQANAMRLAGLPTLPISLESELNTNPFLRTAAPTIHAATATHLQRTPIDEVEVFATLRHWKNNFPIKNIP</sequence>
<dbReference type="EC" id="3.1.2.6" evidence="1"/>
<dbReference type="EMBL" id="AE009442">
    <property type="protein sequence ID" value="AAO29070.1"/>
    <property type="molecule type" value="Genomic_DNA"/>
</dbReference>
<dbReference type="RefSeq" id="WP_011098005.1">
    <property type="nucleotide sequence ID" value="NC_004556.1"/>
</dbReference>
<dbReference type="SMR" id="Q87C74"/>
<dbReference type="GeneID" id="93905020"/>
<dbReference type="KEGG" id="xft:PD_1220"/>
<dbReference type="HOGENOM" id="CLU_030571_4_1_6"/>
<dbReference type="UniPathway" id="UPA00619">
    <property type="reaction ID" value="UER00676"/>
</dbReference>
<dbReference type="Proteomes" id="UP000002516">
    <property type="component" value="Chromosome"/>
</dbReference>
<dbReference type="GO" id="GO:0004416">
    <property type="term" value="F:hydroxyacylglutathione hydrolase activity"/>
    <property type="evidence" value="ECO:0007669"/>
    <property type="project" value="UniProtKB-UniRule"/>
</dbReference>
<dbReference type="GO" id="GO:0046872">
    <property type="term" value="F:metal ion binding"/>
    <property type="evidence" value="ECO:0007669"/>
    <property type="project" value="UniProtKB-KW"/>
</dbReference>
<dbReference type="GO" id="GO:0019243">
    <property type="term" value="P:methylglyoxal catabolic process to D-lactate via S-lactoyl-glutathione"/>
    <property type="evidence" value="ECO:0007669"/>
    <property type="project" value="InterPro"/>
</dbReference>
<dbReference type="CDD" id="cd07723">
    <property type="entry name" value="hydroxyacylglutathione_hydrolase_MBL-fold"/>
    <property type="match status" value="1"/>
</dbReference>
<dbReference type="Gene3D" id="3.60.15.10">
    <property type="entry name" value="Ribonuclease Z/Hydroxyacylglutathione hydrolase-like"/>
    <property type="match status" value="1"/>
</dbReference>
<dbReference type="HAMAP" id="MF_01374">
    <property type="entry name" value="Glyoxalase_2"/>
    <property type="match status" value="1"/>
</dbReference>
<dbReference type="InterPro" id="IPR035680">
    <property type="entry name" value="Clx_II_MBL"/>
</dbReference>
<dbReference type="InterPro" id="IPR050110">
    <property type="entry name" value="Glyoxalase_II_hydrolase"/>
</dbReference>
<dbReference type="InterPro" id="IPR032282">
    <property type="entry name" value="HAGH_C"/>
</dbReference>
<dbReference type="InterPro" id="IPR017782">
    <property type="entry name" value="Hydroxyacylglutathione_Hdrlase"/>
</dbReference>
<dbReference type="InterPro" id="IPR001279">
    <property type="entry name" value="Metallo-B-lactamas"/>
</dbReference>
<dbReference type="InterPro" id="IPR036866">
    <property type="entry name" value="RibonucZ/Hydroxyglut_hydro"/>
</dbReference>
<dbReference type="NCBIfam" id="TIGR03413">
    <property type="entry name" value="GSH_gloB"/>
    <property type="match status" value="1"/>
</dbReference>
<dbReference type="PANTHER" id="PTHR43705">
    <property type="entry name" value="HYDROXYACYLGLUTATHIONE HYDROLASE"/>
    <property type="match status" value="1"/>
</dbReference>
<dbReference type="PANTHER" id="PTHR43705:SF1">
    <property type="entry name" value="HYDROXYACYLGLUTATHIONE HYDROLASE GLOB"/>
    <property type="match status" value="1"/>
</dbReference>
<dbReference type="Pfam" id="PF16123">
    <property type="entry name" value="HAGH_C"/>
    <property type="match status" value="1"/>
</dbReference>
<dbReference type="Pfam" id="PF00753">
    <property type="entry name" value="Lactamase_B"/>
    <property type="match status" value="1"/>
</dbReference>
<dbReference type="PIRSF" id="PIRSF005457">
    <property type="entry name" value="Glx"/>
    <property type="match status" value="1"/>
</dbReference>
<dbReference type="SMART" id="SM00849">
    <property type="entry name" value="Lactamase_B"/>
    <property type="match status" value="1"/>
</dbReference>
<dbReference type="SUPFAM" id="SSF56281">
    <property type="entry name" value="Metallo-hydrolase/oxidoreductase"/>
    <property type="match status" value="1"/>
</dbReference>